<protein>
    <recommendedName>
        <fullName>Probable G-protein coupled receptor 150</fullName>
    </recommendedName>
    <alternativeName>
        <fullName>G-protein coupled receptor PGR11</fullName>
    </alternativeName>
</protein>
<sequence>MEDPFSLAILNPASNLSVPTQPSWSLNLTSEQGASVPGPHSPPRGPPSHRIHLVFLGIILVAAVAGNTTVLCRLCGGSSGPWPGPKRRKMDFLLVQLAAADLYASGGTALSQLAWELLGDPRPALGDLACRLSHLLQASGRGASAHLVALIALERQLAVRIPQGPQLPARALAALSWLLALLLALPPTFVVRWDAPPSSTANAWPGKHCCRGIFAPLPRWHLQVYALYEAIVGFAAPVALLGFSCGHLLCVWWQRGSQAPVARMPWSPSMARASLPSALPQAKVQSLKMSLALALLFVGCDLPYFAARLAAAWSSKPAGDWERESLVAAMRVLEVANSAINPLIYLFFQAGDCRLWRRLRRRLGVLCCVREEEADISEWAGDHQALHRHRWPHPHYHHARREERNQGCLRPPPPRPRPPPCSCESAF</sequence>
<accession>Q8BL07</accession>
<accession>Q147V7</accession>
<accession>Q80UD4</accession>
<organism>
    <name type="scientific">Mus musculus</name>
    <name type="common">Mouse</name>
    <dbReference type="NCBI Taxonomy" id="10090"/>
    <lineage>
        <taxon>Eukaryota</taxon>
        <taxon>Metazoa</taxon>
        <taxon>Chordata</taxon>
        <taxon>Craniata</taxon>
        <taxon>Vertebrata</taxon>
        <taxon>Euteleostomi</taxon>
        <taxon>Mammalia</taxon>
        <taxon>Eutheria</taxon>
        <taxon>Euarchontoglires</taxon>
        <taxon>Glires</taxon>
        <taxon>Rodentia</taxon>
        <taxon>Myomorpha</taxon>
        <taxon>Muroidea</taxon>
        <taxon>Muridae</taxon>
        <taxon>Murinae</taxon>
        <taxon>Mus</taxon>
        <taxon>Mus</taxon>
    </lineage>
</organism>
<keyword id="KW-1003">Cell membrane</keyword>
<keyword id="KW-0297">G-protein coupled receptor</keyword>
<keyword id="KW-0472">Membrane</keyword>
<keyword id="KW-0675">Receptor</keyword>
<keyword id="KW-1185">Reference proteome</keyword>
<keyword id="KW-0807">Transducer</keyword>
<keyword id="KW-0812">Transmembrane</keyword>
<keyword id="KW-1133">Transmembrane helix</keyword>
<proteinExistence type="evidence at transcript level"/>
<name>GP150_MOUSE</name>
<reference key="1">
    <citation type="journal article" date="2005" name="Science">
        <title>The transcriptional landscape of the mammalian genome.</title>
        <authorList>
            <person name="Carninci P."/>
            <person name="Kasukawa T."/>
            <person name="Katayama S."/>
            <person name="Gough J."/>
            <person name="Frith M.C."/>
            <person name="Maeda N."/>
            <person name="Oyama R."/>
            <person name="Ravasi T."/>
            <person name="Lenhard B."/>
            <person name="Wells C."/>
            <person name="Kodzius R."/>
            <person name="Shimokawa K."/>
            <person name="Bajic V.B."/>
            <person name="Brenner S.E."/>
            <person name="Batalov S."/>
            <person name="Forrest A.R."/>
            <person name="Zavolan M."/>
            <person name="Davis M.J."/>
            <person name="Wilming L.G."/>
            <person name="Aidinis V."/>
            <person name="Allen J.E."/>
            <person name="Ambesi-Impiombato A."/>
            <person name="Apweiler R."/>
            <person name="Aturaliya R.N."/>
            <person name="Bailey T.L."/>
            <person name="Bansal M."/>
            <person name="Baxter L."/>
            <person name="Beisel K.W."/>
            <person name="Bersano T."/>
            <person name="Bono H."/>
            <person name="Chalk A.M."/>
            <person name="Chiu K.P."/>
            <person name="Choudhary V."/>
            <person name="Christoffels A."/>
            <person name="Clutterbuck D.R."/>
            <person name="Crowe M.L."/>
            <person name="Dalla E."/>
            <person name="Dalrymple B.P."/>
            <person name="de Bono B."/>
            <person name="Della Gatta G."/>
            <person name="di Bernardo D."/>
            <person name="Down T."/>
            <person name="Engstrom P."/>
            <person name="Fagiolini M."/>
            <person name="Faulkner G."/>
            <person name="Fletcher C.F."/>
            <person name="Fukushima T."/>
            <person name="Furuno M."/>
            <person name="Futaki S."/>
            <person name="Gariboldi M."/>
            <person name="Georgii-Hemming P."/>
            <person name="Gingeras T.R."/>
            <person name="Gojobori T."/>
            <person name="Green R.E."/>
            <person name="Gustincich S."/>
            <person name="Harbers M."/>
            <person name="Hayashi Y."/>
            <person name="Hensch T.K."/>
            <person name="Hirokawa N."/>
            <person name="Hill D."/>
            <person name="Huminiecki L."/>
            <person name="Iacono M."/>
            <person name="Ikeo K."/>
            <person name="Iwama A."/>
            <person name="Ishikawa T."/>
            <person name="Jakt M."/>
            <person name="Kanapin A."/>
            <person name="Katoh M."/>
            <person name="Kawasawa Y."/>
            <person name="Kelso J."/>
            <person name="Kitamura H."/>
            <person name="Kitano H."/>
            <person name="Kollias G."/>
            <person name="Krishnan S.P."/>
            <person name="Kruger A."/>
            <person name="Kummerfeld S.K."/>
            <person name="Kurochkin I.V."/>
            <person name="Lareau L.F."/>
            <person name="Lazarevic D."/>
            <person name="Lipovich L."/>
            <person name="Liu J."/>
            <person name="Liuni S."/>
            <person name="McWilliam S."/>
            <person name="Madan Babu M."/>
            <person name="Madera M."/>
            <person name="Marchionni L."/>
            <person name="Matsuda H."/>
            <person name="Matsuzawa S."/>
            <person name="Miki H."/>
            <person name="Mignone F."/>
            <person name="Miyake S."/>
            <person name="Morris K."/>
            <person name="Mottagui-Tabar S."/>
            <person name="Mulder N."/>
            <person name="Nakano N."/>
            <person name="Nakauchi H."/>
            <person name="Ng P."/>
            <person name="Nilsson R."/>
            <person name="Nishiguchi S."/>
            <person name="Nishikawa S."/>
            <person name="Nori F."/>
            <person name="Ohara O."/>
            <person name="Okazaki Y."/>
            <person name="Orlando V."/>
            <person name="Pang K.C."/>
            <person name="Pavan W.J."/>
            <person name="Pavesi G."/>
            <person name="Pesole G."/>
            <person name="Petrovsky N."/>
            <person name="Piazza S."/>
            <person name="Reed J."/>
            <person name="Reid J.F."/>
            <person name="Ring B.Z."/>
            <person name="Ringwald M."/>
            <person name="Rost B."/>
            <person name="Ruan Y."/>
            <person name="Salzberg S.L."/>
            <person name="Sandelin A."/>
            <person name="Schneider C."/>
            <person name="Schoenbach C."/>
            <person name="Sekiguchi K."/>
            <person name="Semple C.A."/>
            <person name="Seno S."/>
            <person name="Sessa L."/>
            <person name="Sheng Y."/>
            <person name="Shibata Y."/>
            <person name="Shimada H."/>
            <person name="Shimada K."/>
            <person name="Silva D."/>
            <person name="Sinclair B."/>
            <person name="Sperling S."/>
            <person name="Stupka E."/>
            <person name="Sugiura K."/>
            <person name="Sultana R."/>
            <person name="Takenaka Y."/>
            <person name="Taki K."/>
            <person name="Tammoja K."/>
            <person name="Tan S.L."/>
            <person name="Tang S."/>
            <person name="Taylor M.S."/>
            <person name="Tegner J."/>
            <person name="Teichmann S.A."/>
            <person name="Ueda H.R."/>
            <person name="van Nimwegen E."/>
            <person name="Verardo R."/>
            <person name="Wei C.L."/>
            <person name="Yagi K."/>
            <person name="Yamanishi H."/>
            <person name="Zabarovsky E."/>
            <person name="Zhu S."/>
            <person name="Zimmer A."/>
            <person name="Hide W."/>
            <person name="Bult C."/>
            <person name="Grimmond S.M."/>
            <person name="Teasdale R.D."/>
            <person name="Liu E.T."/>
            <person name="Brusic V."/>
            <person name="Quackenbush J."/>
            <person name="Wahlestedt C."/>
            <person name="Mattick J.S."/>
            <person name="Hume D.A."/>
            <person name="Kai C."/>
            <person name="Sasaki D."/>
            <person name="Tomaru Y."/>
            <person name="Fukuda S."/>
            <person name="Kanamori-Katayama M."/>
            <person name="Suzuki M."/>
            <person name="Aoki J."/>
            <person name="Arakawa T."/>
            <person name="Iida J."/>
            <person name="Imamura K."/>
            <person name="Itoh M."/>
            <person name="Kato T."/>
            <person name="Kawaji H."/>
            <person name="Kawagashira N."/>
            <person name="Kawashima T."/>
            <person name="Kojima M."/>
            <person name="Kondo S."/>
            <person name="Konno H."/>
            <person name="Nakano K."/>
            <person name="Ninomiya N."/>
            <person name="Nishio T."/>
            <person name="Okada M."/>
            <person name="Plessy C."/>
            <person name="Shibata K."/>
            <person name="Shiraki T."/>
            <person name="Suzuki S."/>
            <person name="Tagami M."/>
            <person name="Waki K."/>
            <person name="Watahiki A."/>
            <person name="Okamura-Oho Y."/>
            <person name="Suzuki H."/>
            <person name="Kawai J."/>
            <person name="Hayashizaki Y."/>
        </authorList>
    </citation>
    <scope>NUCLEOTIDE SEQUENCE [LARGE SCALE MRNA]</scope>
    <source>
        <strain>C57BL/6J</strain>
        <tissue>Corpus striatum</tissue>
    </source>
</reference>
<reference key="2">
    <citation type="journal article" date="2004" name="Genome Res.">
        <title>The status, quality, and expansion of the NIH full-length cDNA project: the Mammalian Gene Collection (MGC).</title>
        <authorList>
            <consortium name="The MGC Project Team"/>
        </authorList>
    </citation>
    <scope>NUCLEOTIDE SEQUENCE [LARGE SCALE MRNA]</scope>
</reference>
<reference key="3">
    <citation type="journal article" date="2003" name="Proc. Natl. Acad. Sci. U.S.A.">
        <title>The G protein-coupled receptor repertoires of human and mouse.</title>
        <authorList>
            <person name="Vassilatis D.K."/>
            <person name="Hohmann J.G."/>
            <person name="Zeng H."/>
            <person name="Li F."/>
            <person name="Ranchalis J.E."/>
            <person name="Mortrud M.T."/>
            <person name="Brown A."/>
            <person name="Rodriguez S.S."/>
            <person name="Weller J.R."/>
            <person name="Wright A.C."/>
            <person name="Bergmann J.E."/>
            <person name="Gaitanaris G.A."/>
        </authorList>
    </citation>
    <scope>NUCLEOTIDE SEQUENCE [LARGE SCALE MRNA] OF 9-109</scope>
</reference>
<comment type="function">
    <text>Orphan receptor.</text>
</comment>
<comment type="subcellular location">
    <subcellularLocation>
        <location>Cell membrane</location>
        <topology>Multi-pass membrane protein</topology>
    </subcellularLocation>
</comment>
<comment type="similarity">
    <text evidence="2">Belongs to the G-protein coupled receptor 1 family.</text>
</comment>
<dbReference type="EMBL" id="AK047609">
    <property type="protein sequence ID" value="BAC33097.1"/>
    <property type="molecule type" value="mRNA"/>
</dbReference>
<dbReference type="EMBL" id="BC118612">
    <property type="protein sequence ID" value="AAI18613.1"/>
    <property type="molecule type" value="mRNA"/>
</dbReference>
<dbReference type="EMBL" id="BC118614">
    <property type="protein sequence ID" value="AAI18615.1"/>
    <property type="molecule type" value="mRNA"/>
</dbReference>
<dbReference type="EMBL" id="AY255541">
    <property type="protein sequence ID" value="AAO85053.1"/>
    <property type="molecule type" value="mRNA"/>
</dbReference>
<dbReference type="CCDS" id="CCDS26655.1"/>
<dbReference type="RefSeq" id="NP_780704.1">
    <property type="nucleotide sequence ID" value="NM_175495.2"/>
</dbReference>
<dbReference type="SMR" id="Q8BL07"/>
<dbReference type="CORUM" id="Q8BL07"/>
<dbReference type="FunCoup" id="Q8BL07">
    <property type="interactions" value="38"/>
</dbReference>
<dbReference type="STRING" id="10090.ENSMUSP00000049592"/>
<dbReference type="PhosphoSitePlus" id="Q8BL07"/>
<dbReference type="PaxDb" id="10090-ENSMUSP00000049592"/>
<dbReference type="ProteomicsDB" id="267651"/>
<dbReference type="DNASU" id="238725"/>
<dbReference type="Ensembl" id="ENSMUST00000056130.8">
    <property type="protein sequence ID" value="ENSMUSP00000049592.5"/>
    <property type="gene ID" value="ENSMUSG00000045509.8"/>
</dbReference>
<dbReference type="GeneID" id="238725"/>
<dbReference type="KEGG" id="mmu:238725"/>
<dbReference type="UCSC" id="uc007rgg.1">
    <property type="organism name" value="mouse"/>
</dbReference>
<dbReference type="AGR" id="MGI:2441872"/>
<dbReference type="CTD" id="285601"/>
<dbReference type="MGI" id="MGI:2441872">
    <property type="gene designation" value="Gpr150"/>
</dbReference>
<dbReference type="VEuPathDB" id="HostDB:ENSMUSG00000045509"/>
<dbReference type="eggNOG" id="KOG3656">
    <property type="taxonomic scope" value="Eukaryota"/>
</dbReference>
<dbReference type="GeneTree" id="ENSGT00940000159286"/>
<dbReference type="HOGENOM" id="CLU_009579_15_6_1"/>
<dbReference type="InParanoid" id="Q8BL07"/>
<dbReference type="OMA" id="CRDIFAP"/>
<dbReference type="OrthoDB" id="5987909at2759"/>
<dbReference type="PhylomeDB" id="Q8BL07"/>
<dbReference type="TreeFam" id="TF106499"/>
<dbReference type="Reactome" id="R-MMU-418555">
    <property type="pathway name" value="G alpha (s) signalling events"/>
</dbReference>
<dbReference type="BioGRID-ORCS" id="238725">
    <property type="hits" value="2 hits in 75 CRISPR screens"/>
</dbReference>
<dbReference type="PRO" id="PR:Q8BL07"/>
<dbReference type="Proteomes" id="UP000000589">
    <property type="component" value="Chromosome 13"/>
</dbReference>
<dbReference type="RNAct" id="Q8BL07">
    <property type="molecule type" value="protein"/>
</dbReference>
<dbReference type="Bgee" id="ENSMUSG00000045509">
    <property type="expression patterns" value="Expressed in mesodermal cell in embryo and 21 other cell types or tissues"/>
</dbReference>
<dbReference type="GO" id="GO:0005886">
    <property type="term" value="C:plasma membrane"/>
    <property type="evidence" value="ECO:0007669"/>
    <property type="project" value="UniProtKB-SubCell"/>
</dbReference>
<dbReference type="GO" id="GO:0004930">
    <property type="term" value="F:G protein-coupled receptor activity"/>
    <property type="evidence" value="ECO:0007669"/>
    <property type="project" value="UniProtKB-KW"/>
</dbReference>
<dbReference type="CDD" id="cd15198">
    <property type="entry name" value="7tmA_GPR150"/>
    <property type="match status" value="1"/>
</dbReference>
<dbReference type="FunFam" id="1.20.1070.10:FF:000348">
    <property type="entry name" value="G protein-coupled receptor 150"/>
    <property type="match status" value="1"/>
</dbReference>
<dbReference type="Gene3D" id="1.20.1070.10">
    <property type="entry name" value="Rhodopsin 7-helix transmembrane proteins"/>
    <property type="match status" value="1"/>
</dbReference>
<dbReference type="InterPro" id="IPR000276">
    <property type="entry name" value="GPCR_Rhodpsn"/>
</dbReference>
<dbReference type="InterPro" id="IPR017452">
    <property type="entry name" value="GPCR_Rhodpsn_7TM"/>
</dbReference>
<dbReference type="PANTHER" id="PTHR24241:SF83">
    <property type="entry name" value="G-PROTEIN COUPLED RECEPTOR 150-RELATED"/>
    <property type="match status" value="1"/>
</dbReference>
<dbReference type="PANTHER" id="PTHR24241">
    <property type="entry name" value="NEUROPEPTIDE RECEPTOR-RELATED G-PROTEIN COUPLED RECEPTOR"/>
    <property type="match status" value="1"/>
</dbReference>
<dbReference type="Pfam" id="PF00001">
    <property type="entry name" value="7tm_1"/>
    <property type="match status" value="1"/>
</dbReference>
<dbReference type="PRINTS" id="PR00237">
    <property type="entry name" value="GPCRRHODOPSN"/>
</dbReference>
<dbReference type="SUPFAM" id="SSF81321">
    <property type="entry name" value="Family A G protein-coupled receptor-like"/>
    <property type="match status" value="1"/>
</dbReference>
<dbReference type="PROSITE" id="PS50262">
    <property type="entry name" value="G_PROTEIN_RECEP_F1_2"/>
    <property type="match status" value="1"/>
</dbReference>
<feature type="chain" id="PRO_0000069631" description="Probable G-protein coupled receptor 150">
    <location>
        <begin position="1"/>
        <end position="427"/>
    </location>
</feature>
<feature type="topological domain" description="Extracellular" evidence="1">
    <location>
        <begin position="1"/>
        <end position="3"/>
    </location>
</feature>
<feature type="transmembrane region" description="Helical; Name=1" evidence="1">
    <location>
        <begin position="4"/>
        <end position="24"/>
    </location>
</feature>
<feature type="topological domain" description="Cytoplasmic" evidence="1">
    <location>
        <begin position="25"/>
        <end position="50"/>
    </location>
</feature>
<feature type="transmembrane region" description="Helical; Name=2" evidence="1">
    <location>
        <begin position="51"/>
        <end position="71"/>
    </location>
</feature>
<feature type="topological domain" description="Extracellular" evidence="1">
    <location>
        <begin position="72"/>
        <end position="89"/>
    </location>
</feature>
<feature type="transmembrane region" description="Helical; Name=3" evidence="1">
    <location>
        <begin position="90"/>
        <end position="110"/>
    </location>
</feature>
<feature type="topological domain" description="Cytoplasmic" evidence="1">
    <location>
        <begin position="111"/>
        <end position="170"/>
    </location>
</feature>
<feature type="transmembrane region" description="Helical; Name=4" evidence="1">
    <location>
        <begin position="171"/>
        <end position="191"/>
    </location>
</feature>
<feature type="topological domain" description="Extracellular" evidence="1">
    <location>
        <begin position="192"/>
        <end position="230"/>
    </location>
</feature>
<feature type="transmembrane region" description="Helical; Name=5" evidence="1">
    <location>
        <begin position="231"/>
        <end position="251"/>
    </location>
</feature>
<feature type="topological domain" description="Cytoplasmic" evidence="1">
    <location>
        <begin position="252"/>
        <end position="286"/>
    </location>
</feature>
<feature type="transmembrane region" description="Helical; Name=6" evidence="1">
    <location>
        <begin position="287"/>
        <end position="307"/>
    </location>
</feature>
<feature type="topological domain" description="Extracellular" evidence="1">
    <location>
        <begin position="308"/>
        <end position="327"/>
    </location>
</feature>
<feature type="transmembrane region" description="Helical; Name=7" evidence="1">
    <location>
        <begin position="328"/>
        <end position="348"/>
    </location>
</feature>
<feature type="topological domain" description="Cytoplasmic" evidence="1">
    <location>
        <begin position="349"/>
        <end position="427"/>
    </location>
</feature>
<feature type="region of interest" description="Disordered" evidence="3">
    <location>
        <begin position="402"/>
        <end position="427"/>
    </location>
</feature>
<feature type="compositionally biased region" description="Pro residues" evidence="3">
    <location>
        <begin position="410"/>
        <end position="421"/>
    </location>
</feature>
<gene>
    <name type="primary">Gpr150</name>
    <name type="synonym">Pgr11</name>
</gene>
<evidence type="ECO:0000255" key="1"/>
<evidence type="ECO:0000255" key="2">
    <source>
        <dbReference type="PROSITE-ProRule" id="PRU00521"/>
    </source>
</evidence>
<evidence type="ECO:0000256" key="3">
    <source>
        <dbReference type="SAM" id="MobiDB-lite"/>
    </source>
</evidence>